<proteinExistence type="evidence at protein level"/>
<name>TX264_HUMAN</name>
<comment type="function">
    <text evidence="3 4 5">Major reticulophagy (also called ER-phagy) receptor that acts independently of other candidate reticulophagy receptors to remodel subdomains of the endoplasmic reticulum into autophagosomes upon nutrient stress, which then fuse with lysosomes for endoplasmic reticulum turnover (PubMed:31006537, PubMed:31006538). The ATG8-containing isolation membrane (IM) cradles a tubular segment of TEX264-positive ER near a three-way junction, allowing the formation of a synapse of 2 juxtaposed membranes with trans interaction between the TEX264 and ATG8 proteins (PubMed:31006537). Expansion of the IM would extend the capture of ER, possibly through a 'zipper-like' process involving continued trans TEX264-ATG8 interactions, until poorly understood mechanisms lead to the fission of relevant membranes and, ultimately, autophagosomal membrane closure (PubMed:31006537). Also involved in the repair of covalent DNA-protein cross-links (DPCs) during DNA synthesis: acts by bridging VCP/p97 to covalent DNA-protein cross-links (DPCs) and initiating resolution of DPCs by SPRTN (PubMed:32152270).</text>
</comment>
<comment type="subunit">
    <text evidence="3 4 5">Interacts (via the LIR motif) with ATG8 family proteins MAP1LC3A, MAP1LC3B, GABARAP and GABARAPL1 (PubMed:31006537, PubMed:31006538). Interacts with VCP/p97; bridging VCP/p97 to covalent DNA-protein cross-links (DPCs) (PubMed:32152270). Interacts with TOP1 (when sumoylated) (PubMed:32152270).</text>
</comment>
<comment type="interaction">
    <interactant intactId="EBI-10329860">
        <id>Q9Y6I9</id>
    </interactant>
    <interactant intactId="EBI-17979264">
        <id>Q86Y34</id>
        <label>ADGRG3</label>
    </interactant>
    <organismsDiffer>false</organismsDiffer>
    <experiments>3</experiments>
</comment>
<comment type="interaction">
    <interactant intactId="EBI-10329860">
        <id>Q9Y6I9</id>
    </interactant>
    <interactant intactId="EBI-11343438">
        <id>Q3SXY8</id>
        <label>ARL13B</label>
    </interactant>
    <organismsDiffer>false</organismsDiffer>
    <experiments>3</experiments>
</comment>
<comment type="interaction">
    <interactant intactId="EBI-10329860">
        <id>Q9Y6I9</id>
    </interactant>
    <interactant intactId="EBI-2622997">
        <id>Q9HA82</id>
        <label>CERS4</label>
    </interactant>
    <organismsDiffer>false</organismsDiffer>
    <experiments>3</experiments>
</comment>
<comment type="interaction">
    <interactant intactId="EBI-10329860">
        <id>Q9Y6I9</id>
    </interactant>
    <interactant intactId="EBI-751440">
        <id>P57739</id>
        <label>CLDN2</label>
    </interactant>
    <organismsDiffer>false</organismsDiffer>
    <experiments>3</experiments>
</comment>
<comment type="interaction">
    <interactant intactId="EBI-10329860">
        <id>Q9Y6I9</id>
    </interactant>
    <interactant intactId="EBI-6165897">
        <id>Q9NWW5</id>
        <label>CLN6</label>
    </interactant>
    <organismsDiffer>false</organismsDiffer>
    <experiments>3</experiments>
</comment>
<comment type="interaction">
    <interactant intactId="EBI-10329860">
        <id>Q9Y6I9</id>
    </interactant>
    <interactant intactId="EBI-724524">
        <id>O75208</id>
        <label>COQ9</label>
    </interactant>
    <organismsDiffer>false</organismsDiffer>
    <experiments>3</experiments>
</comment>
<comment type="interaction">
    <interactant intactId="EBI-10329860">
        <id>Q9Y6I9</id>
    </interactant>
    <interactant intactId="EBI-6942903">
        <id>Q96BA8</id>
        <label>CREB3L1</label>
    </interactant>
    <organismsDiffer>false</organismsDiffer>
    <experiments>3</experiments>
</comment>
<comment type="interaction">
    <interactant intactId="EBI-10329860">
        <id>Q9Y6I9</id>
    </interactant>
    <interactant intactId="EBI-4319440">
        <id>P54849</id>
        <label>EMP1</label>
    </interactant>
    <organismsDiffer>false</organismsDiffer>
    <experiments>3</experiments>
</comment>
<comment type="interaction">
    <interactant intactId="EBI-10329860">
        <id>Q9Y6I9</id>
    </interactant>
    <interactant intactId="EBI-18304435">
        <id>Q5JX71</id>
        <label>FAM209A</label>
    </interactant>
    <organismsDiffer>false</organismsDiffer>
    <experiments>3</experiments>
</comment>
<comment type="interaction">
    <interactant intactId="EBI-10329860">
        <id>Q9Y6I9</id>
    </interactant>
    <interactant intactId="EBI-2833872">
        <id>O15552</id>
        <label>FFAR2</label>
    </interactant>
    <organismsDiffer>false</organismsDiffer>
    <experiments>3</experiments>
</comment>
<comment type="interaction">
    <interactant intactId="EBI-10329860">
        <id>Q9Y6I9</id>
    </interactant>
    <interactant intactId="EBI-17762181">
        <id>O14843</id>
        <label>FFAR3</label>
    </interactant>
    <organismsDiffer>false</organismsDiffer>
    <experiments>3</experiments>
</comment>
<comment type="interaction">
    <interactant intactId="EBI-10329860">
        <id>Q9Y6I9</id>
    </interactant>
    <interactant intactId="EBI-720116">
        <id>P60520</id>
        <label>GABARAPL2</label>
    </interactant>
    <organismsDiffer>false</organismsDiffer>
    <experiments>4</experiments>
</comment>
<comment type="interaction">
    <interactant intactId="EBI-10329860">
        <id>Q9Y6I9</id>
    </interactant>
    <interactant intactId="EBI-17565645">
        <id>P08034</id>
        <label>GJB1</label>
    </interactant>
    <organismsDiffer>false</organismsDiffer>
    <experiments>3</experiments>
</comment>
<comment type="interaction">
    <interactant intactId="EBI-10329860">
        <id>Q9Y6I9</id>
    </interactant>
    <interactant intactId="EBI-13345167">
        <id>Q8TDT2</id>
        <label>GPR152</label>
    </interactant>
    <organismsDiffer>false</organismsDiffer>
    <experiments>3</experiments>
</comment>
<comment type="interaction">
    <interactant intactId="EBI-10329860">
        <id>Q9Y6I9</id>
    </interactant>
    <interactant intactId="EBI-18076404">
        <id>O15529</id>
        <label>GPR42</label>
    </interactant>
    <organismsDiffer>false</organismsDiffer>
    <experiments>3</experiments>
</comment>
<comment type="interaction">
    <interactant intactId="EBI-10329860">
        <id>Q9Y6I9</id>
    </interactant>
    <interactant intactId="EBI-18016128">
        <id>Q7Z7J7</id>
        <label>LHFPL4</label>
    </interactant>
    <organismsDiffer>false</organismsDiffer>
    <experiments>3</experiments>
</comment>
<comment type="interaction">
    <interactant intactId="EBI-10329860">
        <id>Q9Y6I9</id>
    </interactant>
    <interactant intactId="EBI-2820517">
        <id>Q8TAF8</id>
        <label>LHFPL5</label>
    </interactant>
    <organismsDiffer>false</organismsDiffer>
    <experiments>3</experiments>
</comment>
<comment type="interaction">
    <interactant intactId="EBI-10329860">
        <id>Q9Y6I9</id>
    </interactant>
    <interactant intactId="EBI-11956541">
        <id>Q9GZY8-5</id>
        <label>MFF</label>
    </interactant>
    <organismsDiffer>false</organismsDiffer>
    <experiments>3</experiments>
</comment>
<comment type="interaction">
    <interactant intactId="EBI-10329860">
        <id>Q9Y6I9</id>
    </interactant>
    <interactant intactId="EBI-12806656">
        <id>Q96HJ5</id>
        <label>MS4A3</label>
    </interactant>
    <organismsDiffer>false</organismsDiffer>
    <experiments>4</experiments>
</comment>
<comment type="interaction">
    <interactant intactId="EBI-10329860">
        <id>Q9Y6I9</id>
    </interactant>
    <interactant intactId="EBI-12807478">
        <id>P35372-10</id>
        <label>OPRM1</label>
    </interactant>
    <organismsDiffer>false</organismsDiffer>
    <experiments>3</experiments>
</comment>
<comment type="interaction">
    <interactant intactId="EBI-10329860">
        <id>Q9Y6I9</id>
    </interactant>
    <interactant intactId="EBI-18114847">
        <id>Q12908</id>
        <label>SLC10A2</label>
    </interactant>
    <organismsDiffer>false</organismsDiffer>
    <experiments>3</experiments>
</comment>
<comment type="interaction">
    <interactant intactId="EBI-10329860">
        <id>Q9Y6I9</id>
    </interactant>
    <interactant intactId="EBI-12811757">
        <id>O95436-2</id>
        <label>SLC34A2</label>
    </interactant>
    <organismsDiffer>false</organismsDiffer>
    <experiments>3</experiments>
</comment>
<comment type="interaction">
    <interactant intactId="EBI-10329860">
        <id>Q9Y6I9</id>
    </interactant>
    <interactant intactId="EBI-741850">
        <id>Q9BZL3</id>
        <label>SMIM3</label>
    </interactant>
    <organismsDiffer>false</organismsDiffer>
    <experiments>3</experiments>
</comment>
<comment type="interaction">
    <interactant intactId="EBI-10329860">
        <id>Q9Y6I9</id>
    </interactant>
    <interactant intactId="EBI-13351685">
        <id>Q96CE8</id>
        <label>TM4SF18</label>
    </interactant>
    <organismsDiffer>false</organismsDiffer>
    <experiments>3</experiments>
</comment>
<comment type="interaction">
    <interactant intactId="EBI-10329860">
        <id>Q9Y6I9</id>
    </interactant>
    <interactant intactId="EBI-8649725">
        <id>Q9BSE2</id>
        <label>TMEM79</label>
    </interactant>
    <organismsDiffer>false</organismsDiffer>
    <experiments>8</experiments>
</comment>
<comment type="interaction">
    <interactant intactId="EBI-10329860">
        <id>Q9Y6I9</id>
    </interactant>
    <interactant intactId="EBI-2466403">
        <id>O95859</id>
        <label>TSPAN12</label>
    </interactant>
    <organismsDiffer>false</organismsDiffer>
    <experiments>3</experiments>
</comment>
<comment type="subcellular location">
    <subcellularLocation>
        <location evidence="3 4">Endoplasmic reticulum membrane</location>
        <topology evidence="3 4">Single-pass type III membrane protein</topology>
    </subcellularLocation>
    <subcellularLocation>
        <location evidence="3 4">Cytoplasmic vesicle</location>
        <location evidence="3 4">Autophagosome</location>
    </subcellularLocation>
    <subcellularLocation>
        <location evidence="5">Cytoplasm</location>
        <location evidence="5">Cytosol</location>
    </subcellularLocation>
    <subcellularLocation>
        <location evidence="5">Nucleus</location>
    </subcellularLocation>
    <subcellularLocation>
        <location evidence="5">Chromosome</location>
    </subcellularLocation>
    <text evidence="3 5">Is trafficked from tubular ER to growing autophagosomes via its cytosolic LIR motif (PubMed:31006537). Also found in the cytosol, nucleus and chromatin (PubMed:32152270). In response to formation of covalent DNA-protein cross-links (DPCs), localizes to the nuclear periphery, and associates with DNA replication forks (PubMed:32152270).</text>
</comment>
<comment type="domain">
    <text evidence="3 4">The LIR motif in the cytosol-facing C-terminal region is involved in the interaction with ATG8 proteins.</text>
</comment>
<comment type="domain">
    <text evidence="4">The disordered region is required for autophagosome binding and reticulophagy, probably via bridging the long distance between endoplasmic reticulum and autophagosome membranes, because ribosomes exist on endoplasmic reticulum membranes that attach to autophagic membranes.</text>
</comment>
<comment type="sequence caution" evidence="9">
    <conflict type="erroneous initiation">
        <sequence resource="EMBL-CDS" id="AAD52584"/>
    </conflict>
</comment>
<reference key="1">
    <citation type="submission" date="1998-06" db="EMBL/GenBank/DDBJ databases">
        <authorList>
            <person name="Sheppard P."/>
            <person name="Sexson S."/>
            <person name="Jelinek L."/>
            <person name="Whitmore T."/>
            <person name="Grant F."/>
            <person name="O'Hara P.J."/>
        </authorList>
    </citation>
    <scope>NUCLEOTIDE SEQUENCE [MRNA]</scope>
</reference>
<reference key="2">
    <citation type="journal article" date="2003" name="Genome Res.">
        <title>The secreted protein discovery initiative (SPDI), a large-scale effort to identify novel human secreted and transmembrane proteins: a bioinformatics assessment.</title>
        <authorList>
            <person name="Clark H.F."/>
            <person name="Gurney A.L."/>
            <person name="Abaya E."/>
            <person name="Baker K."/>
            <person name="Baldwin D.T."/>
            <person name="Brush J."/>
            <person name="Chen J."/>
            <person name="Chow B."/>
            <person name="Chui C."/>
            <person name="Crowley C."/>
            <person name="Currell B."/>
            <person name="Deuel B."/>
            <person name="Dowd P."/>
            <person name="Eaton D."/>
            <person name="Foster J.S."/>
            <person name="Grimaldi C."/>
            <person name="Gu Q."/>
            <person name="Hass P.E."/>
            <person name="Heldens S."/>
            <person name="Huang A."/>
            <person name="Kim H.S."/>
            <person name="Klimowski L."/>
            <person name="Jin Y."/>
            <person name="Johnson S."/>
            <person name="Lee J."/>
            <person name="Lewis L."/>
            <person name="Liao D."/>
            <person name="Mark M.R."/>
            <person name="Robbie E."/>
            <person name="Sanchez C."/>
            <person name="Schoenfeld J."/>
            <person name="Seshagiri S."/>
            <person name="Simmons L."/>
            <person name="Singh J."/>
            <person name="Smith V."/>
            <person name="Stinson J."/>
            <person name="Vagts A."/>
            <person name="Vandlen R.L."/>
            <person name="Watanabe C."/>
            <person name="Wieand D."/>
            <person name="Woods K."/>
            <person name="Xie M.-H."/>
            <person name="Yansura D.G."/>
            <person name="Yi S."/>
            <person name="Yu G."/>
            <person name="Yuan J."/>
            <person name="Zhang M."/>
            <person name="Zhang Z."/>
            <person name="Goddard A.D."/>
            <person name="Wood W.I."/>
            <person name="Godowski P.J."/>
            <person name="Gray A.M."/>
        </authorList>
    </citation>
    <scope>NUCLEOTIDE SEQUENCE [LARGE SCALE MRNA]</scope>
</reference>
<reference key="3">
    <citation type="journal article" date="2004" name="Nat. Genet.">
        <title>Complete sequencing and characterization of 21,243 full-length human cDNAs.</title>
        <authorList>
            <person name="Ota T."/>
            <person name="Suzuki Y."/>
            <person name="Nishikawa T."/>
            <person name="Otsuki T."/>
            <person name="Sugiyama T."/>
            <person name="Irie R."/>
            <person name="Wakamatsu A."/>
            <person name="Hayashi K."/>
            <person name="Sato H."/>
            <person name="Nagai K."/>
            <person name="Kimura K."/>
            <person name="Makita H."/>
            <person name="Sekine M."/>
            <person name="Obayashi M."/>
            <person name="Nishi T."/>
            <person name="Shibahara T."/>
            <person name="Tanaka T."/>
            <person name="Ishii S."/>
            <person name="Yamamoto J."/>
            <person name="Saito K."/>
            <person name="Kawai Y."/>
            <person name="Isono Y."/>
            <person name="Nakamura Y."/>
            <person name="Nagahari K."/>
            <person name="Murakami K."/>
            <person name="Yasuda T."/>
            <person name="Iwayanagi T."/>
            <person name="Wagatsuma M."/>
            <person name="Shiratori A."/>
            <person name="Sudo H."/>
            <person name="Hosoiri T."/>
            <person name="Kaku Y."/>
            <person name="Kodaira H."/>
            <person name="Kondo H."/>
            <person name="Sugawara M."/>
            <person name="Takahashi M."/>
            <person name="Kanda K."/>
            <person name="Yokoi T."/>
            <person name="Furuya T."/>
            <person name="Kikkawa E."/>
            <person name="Omura Y."/>
            <person name="Abe K."/>
            <person name="Kamihara K."/>
            <person name="Katsuta N."/>
            <person name="Sato K."/>
            <person name="Tanikawa M."/>
            <person name="Yamazaki M."/>
            <person name="Ninomiya K."/>
            <person name="Ishibashi T."/>
            <person name="Yamashita H."/>
            <person name="Murakawa K."/>
            <person name="Fujimori K."/>
            <person name="Tanai H."/>
            <person name="Kimata M."/>
            <person name="Watanabe M."/>
            <person name="Hiraoka S."/>
            <person name="Chiba Y."/>
            <person name="Ishida S."/>
            <person name="Ono Y."/>
            <person name="Takiguchi S."/>
            <person name="Watanabe S."/>
            <person name="Yosida M."/>
            <person name="Hotuta T."/>
            <person name="Kusano J."/>
            <person name="Kanehori K."/>
            <person name="Takahashi-Fujii A."/>
            <person name="Hara H."/>
            <person name="Tanase T.-O."/>
            <person name="Nomura Y."/>
            <person name="Togiya S."/>
            <person name="Komai F."/>
            <person name="Hara R."/>
            <person name="Takeuchi K."/>
            <person name="Arita M."/>
            <person name="Imose N."/>
            <person name="Musashino K."/>
            <person name="Yuuki H."/>
            <person name="Oshima A."/>
            <person name="Sasaki N."/>
            <person name="Aotsuka S."/>
            <person name="Yoshikawa Y."/>
            <person name="Matsunawa H."/>
            <person name="Ichihara T."/>
            <person name="Shiohata N."/>
            <person name="Sano S."/>
            <person name="Moriya S."/>
            <person name="Momiyama H."/>
            <person name="Satoh N."/>
            <person name="Takami S."/>
            <person name="Terashima Y."/>
            <person name="Suzuki O."/>
            <person name="Nakagawa S."/>
            <person name="Senoh A."/>
            <person name="Mizoguchi H."/>
            <person name="Goto Y."/>
            <person name="Shimizu F."/>
            <person name="Wakebe H."/>
            <person name="Hishigaki H."/>
            <person name="Watanabe T."/>
            <person name="Sugiyama A."/>
            <person name="Takemoto M."/>
            <person name="Kawakami B."/>
            <person name="Yamazaki M."/>
            <person name="Watanabe K."/>
            <person name="Kumagai A."/>
            <person name="Itakura S."/>
            <person name="Fukuzumi Y."/>
            <person name="Fujimori Y."/>
            <person name="Komiyama M."/>
            <person name="Tashiro H."/>
            <person name="Tanigami A."/>
            <person name="Fujiwara T."/>
            <person name="Ono T."/>
            <person name="Yamada K."/>
            <person name="Fujii Y."/>
            <person name="Ozaki K."/>
            <person name="Hirao M."/>
            <person name="Ohmori Y."/>
            <person name="Kawabata A."/>
            <person name="Hikiji T."/>
            <person name="Kobatake N."/>
            <person name="Inagaki H."/>
            <person name="Ikema Y."/>
            <person name="Okamoto S."/>
            <person name="Okitani R."/>
            <person name="Kawakami T."/>
            <person name="Noguchi S."/>
            <person name="Itoh T."/>
            <person name="Shigeta K."/>
            <person name="Senba T."/>
            <person name="Matsumura K."/>
            <person name="Nakajima Y."/>
            <person name="Mizuno T."/>
            <person name="Morinaga M."/>
            <person name="Sasaki M."/>
            <person name="Togashi T."/>
            <person name="Oyama M."/>
            <person name="Hata H."/>
            <person name="Watanabe M."/>
            <person name="Komatsu T."/>
            <person name="Mizushima-Sugano J."/>
            <person name="Satoh T."/>
            <person name="Shirai Y."/>
            <person name="Takahashi Y."/>
            <person name="Nakagawa K."/>
            <person name="Okumura K."/>
            <person name="Nagase T."/>
            <person name="Nomura N."/>
            <person name="Kikuchi H."/>
            <person name="Masuho Y."/>
            <person name="Yamashita R."/>
            <person name="Nakai K."/>
            <person name="Yada T."/>
            <person name="Nakamura Y."/>
            <person name="Ohara O."/>
            <person name="Isogai T."/>
            <person name="Sugano S."/>
        </authorList>
    </citation>
    <scope>NUCLEOTIDE SEQUENCE [LARGE SCALE MRNA]</scope>
</reference>
<reference key="4">
    <citation type="submission" date="2005-07" db="EMBL/GenBank/DDBJ databases">
        <authorList>
            <person name="Mural R.J."/>
            <person name="Istrail S."/>
            <person name="Sutton G.G."/>
            <person name="Florea L."/>
            <person name="Halpern A.L."/>
            <person name="Mobarry C.M."/>
            <person name="Lippert R."/>
            <person name="Walenz B."/>
            <person name="Shatkay H."/>
            <person name="Dew I."/>
            <person name="Miller J.R."/>
            <person name="Flanigan M.J."/>
            <person name="Edwards N.J."/>
            <person name="Bolanos R."/>
            <person name="Fasulo D."/>
            <person name="Halldorsson B.V."/>
            <person name="Hannenhalli S."/>
            <person name="Turner R."/>
            <person name="Yooseph S."/>
            <person name="Lu F."/>
            <person name="Nusskern D.R."/>
            <person name="Shue B.C."/>
            <person name="Zheng X.H."/>
            <person name="Zhong F."/>
            <person name="Delcher A.L."/>
            <person name="Huson D.H."/>
            <person name="Kravitz S.A."/>
            <person name="Mouchard L."/>
            <person name="Reinert K."/>
            <person name="Remington K.A."/>
            <person name="Clark A.G."/>
            <person name="Waterman M.S."/>
            <person name="Eichler E.E."/>
            <person name="Adams M.D."/>
            <person name="Hunkapiller M.W."/>
            <person name="Myers E.W."/>
            <person name="Venter J.C."/>
        </authorList>
    </citation>
    <scope>NUCLEOTIDE SEQUENCE [LARGE SCALE GENOMIC DNA]</scope>
</reference>
<reference key="5">
    <citation type="journal article" date="2004" name="Genome Res.">
        <title>The status, quality, and expansion of the NIH full-length cDNA project: the Mammalian Gene Collection (MGC).</title>
        <authorList>
            <consortium name="The MGC Project Team"/>
        </authorList>
    </citation>
    <scope>NUCLEOTIDE SEQUENCE [LARGE SCALE MRNA]</scope>
    <source>
        <tissue>Skin</tissue>
    </source>
</reference>
<reference key="6">
    <citation type="submission" date="1999-07" db="EMBL/GenBank/DDBJ databases">
        <title>New sequences cloned from adult brain cDNA library.</title>
        <authorList>
            <person name="Deng Y.C."/>
            <person name="Yao L.B."/>
            <person name="Su C.Z."/>
            <person name="Lui X.P."/>
            <person name="Nie X.Y."/>
            <person name="Wang J.C."/>
            <person name="Zhang X.G."/>
            <person name="Yang M."/>
            <person name="Ji S.P."/>
            <person name="Li F.Y."/>
            <person name="Han J."/>
            <person name="Han Y.H."/>
            <person name="He P."/>
        </authorList>
    </citation>
    <scope>NUCLEOTIDE SEQUENCE [MRNA] OF 212-313</scope>
    <source>
        <tissue>Brain</tissue>
    </source>
</reference>
<reference key="7">
    <citation type="journal article" date="2006" name="Cell">
        <title>Global, in vivo, and site-specific phosphorylation dynamics in signaling networks.</title>
        <authorList>
            <person name="Olsen J.V."/>
            <person name="Blagoev B."/>
            <person name="Gnad F."/>
            <person name="Macek B."/>
            <person name="Kumar C."/>
            <person name="Mortensen P."/>
            <person name="Mann M."/>
        </authorList>
    </citation>
    <scope>IDENTIFICATION BY MASS SPECTROMETRY [LARGE SCALE ANALYSIS]</scope>
    <source>
        <tissue>Cervix carcinoma</tissue>
    </source>
</reference>
<reference key="8">
    <citation type="journal article" date="2011" name="BMC Syst. Biol.">
        <title>Initial characterization of the human central proteome.</title>
        <authorList>
            <person name="Burkard T.R."/>
            <person name="Planyavsky M."/>
            <person name="Kaupe I."/>
            <person name="Breitwieser F.P."/>
            <person name="Buerckstuemmer T."/>
            <person name="Bennett K.L."/>
            <person name="Superti-Furga G."/>
            <person name="Colinge J."/>
        </authorList>
    </citation>
    <scope>IDENTIFICATION BY MASS SPECTROMETRY [LARGE SCALE ANALYSIS]</scope>
</reference>
<reference key="9">
    <citation type="journal article" date="2013" name="J. Proteome Res.">
        <title>Toward a comprehensive characterization of a human cancer cell phosphoproteome.</title>
        <authorList>
            <person name="Zhou H."/>
            <person name="Di Palma S."/>
            <person name="Preisinger C."/>
            <person name="Peng M."/>
            <person name="Polat A.N."/>
            <person name="Heck A.J."/>
            <person name="Mohammed S."/>
        </authorList>
    </citation>
    <scope>PHOSPHORYLATION [LARGE SCALE ANALYSIS] AT SER-244</scope>
    <scope>IDENTIFICATION BY MASS SPECTROMETRY [LARGE SCALE ANALYSIS]</scope>
    <source>
        <tissue>Cervix carcinoma</tissue>
        <tissue>Erythroleukemia</tissue>
    </source>
</reference>
<reference key="10">
    <citation type="journal article" date="2014" name="J. Proteomics">
        <title>An enzyme assisted RP-RPLC approach for in-depth analysis of human liver phosphoproteome.</title>
        <authorList>
            <person name="Bian Y."/>
            <person name="Song C."/>
            <person name="Cheng K."/>
            <person name="Dong M."/>
            <person name="Wang F."/>
            <person name="Huang J."/>
            <person name="Sun D."/>
            <person name="Wang L."/>
            <person name="Ye M."/>
            <person name="Zou H."/>
        </authorList>
    </citation>
    <scope>PHOSPHORYLATION [LARGE SCALE ANALYSIS] AT SER-239 AND SER-244</scope>
    <scope>IDENTIFICATION BY MASS SPECTROMETRY [LARGE SCALE ANALYSIS]</scope>
    <source>
        <tissue>Liver</tissue>
    </source>
</reference>
<reference key="11">
    <citation type="journal article" date="2019" name="Mol. Cell">
        <title>Intrinsically disordered protein TEX264 mediates ER-phagy.</title>
        <authorList>
            <person name="Chino H."/>
            <person name="Hatta T."/>
            <person name="Natsume T."/>
            <person name="Mizushima N."/>
        </authorList>
    </citation>
    <scope>INTERACTION WITH MAP1LC3A; MAP1LC3B; GABARAP AND GABARAPL1</scope>
    <scope>SUBCELLULAR LOCATION</scope>
    <scope>TOPOLOGY</scope>
    <scope>FUNCTION</scope>
    <scope>DOMAIN</scope>
    <scope>MUTAGENESIS OF PHE-273 AND LEU-276</scope>
</reference>
<reference key="12">
    <citation type="journal article" date="2019" name="Mol. Cell">
        <title>TEX264 is an endoplasmic reticulum-resident ATG8-interacting protein critical for ER remodeling during nutrient stress.</title>
        <authorList>
            <person name="An H."/>
            <person name="Ordureau A."/>
            <person name="Paulo J.A."/>
            <person name="Shoemaker C.J."/>
            <person name="Denic V."/>
            <person name="Harper J.W."/>
        </authorList>
    </citation>
    <scope>INTERACTION WITH MAP1LC3A; MAP1LC3B AND GABARAPL1</scope>
    <scope>SUBCELLULAR LOCATION</scope>
    <scope>TOPOLOGY</scope>
    <scope>FUNCTION</scope>
    <scope>DOMAIN</scope>
    <scope>MUTAGENESIS OF PHE-273</scope>
</reference>
<reference key="13">
    <citation type="journal article" date="2020" name="Nat. Commun.">
        <title>TEX264 coordinates p97- and SPRTN-mediated resolution of topoisomerase 1-DNA adducts.</title>
        <authorList>
            <person name="Fielden J."/>
            <person name="Wiseman K."/>
            <person name="Torrecilla I."/>
            <person name="Li S."/>
            <person name="Hume S."/>
            <person name="Chiang S.C."/>
            <person name="Ruggiano A."/>
            <person name="Narayan Singh A."/>
            <person name="Freire R."/>
            <person name="Hassanieh S."/>
            <person name="Domingo E."/>
            <person name="Vendrell I."/>
            <person name="Fischer R."/>
            <person name="Kessler B.M."/>
            <person name="Maughan T.S."/>
            <person name="El-Khamisy S.F."/>
            <person name="Ramadan K."/>
        </authorList>
    </citation>
    <scope>FUNCTION</scope>
    <scope>INTERACTION WITH VCP</scope>
    <scope>SUBCELLULAR LOCATION</scope>
</reference>
<sequence>MSDLLLLGLIGGLTLLLLLTLLAFAGYSGLLAGVEVSAGSPPIRNVTVAYKFHMGLYGETGRLFTESCSISPKLRSIAVYYDNPHMVPPDKCRCAVGSILSEGEESPSPELIDLYQKFGFKVFSFPAPSHVVTATFPYTTILSIWLATRRVHPALDTYIKERKLCAYPRLEIYQEDQIHFMCPLARQGDFYVPEMKETEWKWRGLVEAIDTQVDGTGADTMSDTSSVSLEVSPGSRETSAATLSPGASSRGWDDGDTRSEHSYSESGASGSSFEELDLEGEGPLGESRLDPGTEPLGTTKWLWEPTAPEKGKE</sequence>
<organism>
    <name type="scientific">Homo sapiens</name>
    <name type="common">Human</name>
    <dbReference type="NCBI Taxonomy" id="9606"/>
    <lineage>
        <taxon>Eukaryota</taxon>
        <taxon>Metazoa</taxon>
        <taxon>Chordata</taxon>
        <taxon>Craniata</taxon>
        <taxon>Vertebrata</taxon>
        <taxon>Euteleostomi</taxon>
        <taxon>Mammalia</taxon>
        <taxon>Eutheria</taxon>
        <taxon>Euarchontoglires</taxon>
        <taxon>Primates</taxon>
        <taxon>Haplorrhini</taxon>
        <taxon>Catarrhini</taxon>
        <taxon>Hominidae</taxon>
        <taxon>Homo</taxon>
    </lineage>
</organism>
<protein>
    <recommendedName>
        <fullName evidence="9">Testis-expressed protein 264</fullName>
    </recommendedName>
    <alternativeName>
        <fullName evidence="8">Putative secreted protein Zsig11</fullName>
    </alternativeName>
</protein>
<keyword id="KW-0002">3D-structure</keyword>
<keyword id="KW-0072">Autophagy</keyword>
<keyword id="KW-0158">Chromosome</keyword>
<keyword id="KW-0963">Cytoplasm</keyword>
<keyword id="KW-0968">Cytoplasmic vesicle</keyword>
<keyword id="KW-0227">DNA damage</keyword>
<keyword id="KW-0234">DNA repair</keyword>
<keyword id="KW-0256">Endoplasmic reticulum</keyword>
<keyword id="KW-0472">Membrane</keyword>
<keyword id="KW-0539">Nucleus</keyword>
<keyword id="KW-0597">Phosphoprotein</keyword>
<keyword id="KW-1267">Proteomics identification</keyword>
<keyword id="KW-1185">Reference proteome</keyword>
<keyword id="KW-0812">Transmembrane</keyword>
<keyword id="KW-1133">Transmembrane helix</keyword>
<feature type="chain" id="PRO_0000022601" description="Testis-expressed protein 264">
    <location>
        <begin position="1"/>
        <end position="313"/>
    </location>
</feature>
<feature type="topological domain" description="Lumenal" evidence="4">
    <location>
        <begin position="1"/>
        <end position="6"/>
    </location>
</feature>
<feature type="transmembrane region" description="Helical; Signal-anchor for type III membrane protein" evidence="1">
    <location>
        <begin position="7"/>
        <end position="31"/>
    </location>
</feature>
<feature type="topological domain" description="Cytoplasmic" evidence="4">
    <location>
        <begin position="32"/>
        <end position="313"/>
    </location>
</feature>
<feature type="region of interest" description="Disordered" evidence="10">
    <location>
        <begin position="193"/>
        <end position="313"/>
    </location>
</feature>
<feature type="short sequence motif" description="LIR motif" evidence="10">
    <location>
        <begin position="273"/>
        <end position="276"/>
    </location>
</feature>
<feature type="compositionally biased region" description="Polar residues" evidence="2">
    <location>
        <begin position="219"/>
        <end position="247"/>
    </location>
</feature>
<feature type="compositionally biased region" description="Basic and acidic residues" evidence="2">
    <location>
        <begin position="251"/>
        <end position="263"/>
    </location>
</feature>
<feature type="compositionally biased region" description="Low complexity" evidence="2">
    <location>
        <begin position="264"/>
        <end position="273"/>
    </location>
</feature>
<feature type="modified residue" description="Phosphoserine" evidence="13">
    <location>
        <position position="239"/>
    </location>
</feature>
<feature type="modified residue" description="Phosphoserine" evidence="12 13">
    <location>
        <position position="244"/>
    </location>
</feature>
<feature type="sequence variant" id="VAR_061718" description="In dbSNP:rs11553574.">
    <original>G</original>
    <variation>E</variation>
    <location>
        <position position="292"/>
    </location>
</feature>
<feature type="mutagenesis site" description="Completely abolishes the interaction with LC3B." evidence="3 4">
    <original>F</original>
    <variation>A</variation>
    <location>
        <position position="273"/>
    </location>
</feature>
<feature type="mutagenesis site" description="Completely abolishes the interaction with LC3B." evidence="4">
    <original>L</original>
    <variation>A</variation>
    <location>
        <position position="276"/>
    </location>
</feature>
<feature type="turn" evidence="14">
    <location>
        <begin position="276"/>
        <end position="279"/>
    </location>
</feature>
<dbReference type="EMBL" id="AF072733">
    <property type="protein sequence ID" value="AAD22397.1"/>
    <property type="molecule type" value="mRNA"/>
</dbReference>
<dbReference type="EMBL" id="AY358972">
    <property type="protein sequence ID" value="AAQ89331.1"/>
    <property type="molecule type" value="mRNA"/>
</dbReference>
<dbReference type="EMBL" id="AK023997">
    <property type="protein sequence ID" value="BAG51249.1"/>
    <property type="molecule type" value="mRNA"/>
</dbReference>
<dbReference type="EMBL" id="CH471055">
    <property type="protein sequence ID" value="EAW65146.1"/>
    <property type="molecule type" value="Genomic_DNA"/>
</dbReference>
<dbReference type="EMBL" id="BC008742">
    <property type="protein sequence ID" value="AAH08742.1"/>
    <property type="molecule type" value="mRNA"/>
</dbReference>
<dbReference type="EMBL" id="AF172327">
    <property type="protein sequence ID" value="AAD52584.1"/>
    <property type="status" value="ALT_INIT"/>
    <property type="molecule type" value="mRNA"/>
</dbReference>
<dbReference type="CCDS" id="CCDS2833.1"/>
<dbReference type="RefSeq" id="NP_001123356.1">
    <property type="nucleotide sequence ID" value="NM_001129884.3"/>
</dbReference>
<dbReference type="RefSeq" id="NP_001230654.1">
    <property type="nucleotide sequence ID" value="NM_001243725.2"/>
</dbReference>
<dbReference type="RefSeq" id="NP_001230655.1">
    <property type="nucleotide sequence ID" value="NM_001243726.2"/>
</dbReference>
<dbReference type="RefSeq" id="NP_001230656.1">
    <property type="nucleotide sequence ID" value="NM_001243727.2"/>
</dbReference>
<dbReference type="RefSeq" id="NP_001265124.1">
    <property type="nucleotide sequence ID" value="NM_001278195.2"/>
</dbReference>
<dbReference type="RefSeq" id="NP_057010.1">
    <property type="nucleotide sequence ID" value="NM_015926.6"/>
</dbReference>
<dbReference type="RefSeq" id="XP_006713258.1">
    <property type="nucleotide sequence ID" value="XM_006713195.4"/>
</dbReference>
<dbReference type="RefSeq" id="XP_006713260.1">
    <property type="nucleotide sequence ID" value="XM_006713197.5"/>
</dbReference>
<dbReference type="RefSeq" id="XP_011532107.1">
    <property type="nucleotide sequence ID" value="XM_011533805.3"/>
</dbReference>
<dbReference type="RefSeq" id="XP_047304233.1">
    <property type="nucleotide sequence ID" value="XM_047448277.1"/>
</dbReference>
<dbReference type="RefSeq" id="XP_054202752.1">
    <property type="nucleotide sequence ID" value="XM_054346777.1"/>
</dbReference>
<dbReference type="RefSeq" id="XP_054202753.1">
    <property type="nucleotide sequence ID" value="XM_054346778.1"/>
</dbReference>
<dbReference type="RefSeq" id="XP_054202754.1">
    <property type="nucleotide sequence ID" value="XM_054346779.1"/>
</dbReference>
<dbReference type="RefSeq" id="XP_054202755.1">
    <property type="nucleotide sequence ID" value="XM_054346780.1"/>
</dbReference>
<dbReference type="PDB" id="7VEC">
    <property type="method" value="X-ray"/>
    <property type="resolution" value="3.00 A"/>
    <property type="chains" value="M/N/O/P/Q/R/S/T/U/V/X=271-278"/>
</dbReference>
<dbReference type="PDB" id="7VED">
    <property type="method" value="X-ray"/>
    <property type="resolution" value="2.02 A"/>
    <property type="chains" value="A/B=271-281"/>
</dbReference>
<dbReference type="PDBsum" id="7VEC"/>
<dbReference type="PDBsum" id="7VED"/>
<dbReference type="SMR" id="Q9Y6I9"/>
<dbReference type="BioGRID" id="119503">
    <property type="interactions" value="205"/>
</dbReference>
<dbReference type="FunCoup" id="Q9Y6I9">
    <property type="interactions" value="741"/>
</dbReference>
<dbReference type="IntAct" id="Q9Y6I9">
    <property type="interactions" value="85"/>
</dbReference>
<dbReference type="MINT" id="Q9Y6I9"/>
<dbReference type="STRING" id="9606.ENSP00000396628"/>
<dbReference type="ChEMBL" id="CHEMBL4295994"/>
<dbReference type="GlyGen" id="Q9Y6I9">
    <property type="glycosylation" value="3 sites, 1 N-linked glycan (1 site), 2 O-linked glycans (2 sites)"/>
</dbReference>
<dbReference type="iPTMnet" id="Q9Y6I9"/>
<dbReference type="PhosphoSitePlus" id="Q9Y6I9"/>
<dbReference type="SwissPalm" id="Q9Y6I9"/>
<dbReference type="BioMuta" id="TEX264"/>
<dbReference type="DMDM" id="22002027"/>
<dbReference type="jPOST" id="Q9Y6I9"/>
<dbReference type="MassIVE" id="Q9Y6I9"/>
<dbReference type="PaxDb" id="9606-ENSP00000396628"/>
<dbReference type="PeptideAtlas" id="Q9Y6I9"/>
<dbReference type="ProteomicsDB" id="86698"/>
<dbReference type="Pumba" id="Q9Y6I9"/>
<dbReference type="TopDownProteomics" id="Q9Y6I9"/>
<dbReference type="Antibodypedia" id="2567">
    <property type="antibodies" value="93 antibodies from 18 providers"/>
</dbReference>
<dbReference type="DNASU" id="51368"/>
<dbReference type="Ensembl" id="ENST00000341333.10">
    <property type="protein sequence ID" value="ENSP00000340969.5"/>
    <property type="gene ID" value="ENSG00000164081.13"/>
</dbReference>
<dbReference type="Ensembl" id="ENST00000395057.5">
    <property type="protein sequence ID" value="ENSP00000378497.1"/>
    <property type="gene ID" value="ENSG00000164081.13"/>
</dbReference>
<dbReference type="Ensembl" id="ENST00000415259.5">
    <property type="protein sequence ID" value="ENSP00000396628.1"/>
    <property type="gene ID" value="ENSG00000164081.13"/>
</dbReference>
<dbReference type="Ensembl" id="ENST00000416589.5">
    <property type="protein sequence ID" value="ENSP00000398802.1"/>
    <property type="gene ID" value="ENSG00000164081.13"/>
</dbReference>
<dbReference type="Ensembl" id="ENST00000457573.5">
    <property type="protein sequence ID" value="ENSP00000408186.1"/>
    <property type="gene ID" value="ENSG00000164081.13"/>
</dbReference>
<dbReference type="Ensembl" id="ENST00000611400.4">
    <property type="protein sequence ID" value="ENSP00000477946.1"/>
    <property type="gene ID" value="ENSG00000164081.13"/>
</dbReference>
<dbReference type="GeneID" id="51368"/>
<dbReference type="KEGG" id="hsa:51368"/>
<dbReference type="MANE-Select" id="ENST00000341333.10">
    <property type="protein sequence ID" value="ENSP00000340969.5"/>
    <property type="RefSeq nucleotide sequence ID" value="NM_015926.6"/>
    <property type="RefSeq protein sequence ID" value="NP_057010.1"/>
</dbReference>
<dbReference type="UCSC" id="uc003dbk.6">
    <property type="organism name" value="human"/>
</dbReference>
<dbReference type="AGR" id="HGNC:30247"/>
<dbReference type="CTD" id="51368"/>
<dbReference type="DisGeNET" id="51368"/>
<dbReference type="GeneCards" id="TEX264"/>
<dbReference type="HGNC" id="HGNC:30247">
    <property type="gene designation" value="TEX264"/>
</dbReference>
<dbReference type="HPA" id="ENSG00000164081">
    <property type="expression patterns" value="Low tissue specificity"/>
</dbReference>
<dbReference type="MIM" id="620608">
    <property type="type" value="gene"/>
</dbReference>
<dbReference type="neXtProt" id="NX_Q9Y6I9"/>
<dbReference type="OpenTargets" id="ENSG00000164081"/>
<dbReference type="PharmGKB" id="PA134875244"/>
<dbReference type="VEuPathDB" id="HostDB:ENSG00000164081"/>
<dbReference type="eggNOG" id="ENOG502S3D1">
    <property type="taxonomic scope" value="Eukaryota"/>
</dbReference>
<dbReference type="GeneTree" id="ENSGT00390000016901"/>
<dbReference type="HOGENOM" id="CLU_077435_0_0_1"/>
<dbReference type="InParanoid" id="Q9Y6I9"/>
<dbReference type="OMA" id="GPYKECG"/>
<dbReference type="OrthoDB" id="2140079at2759"/>
<dbReference type="PAN-GO" id="Q9Y6I9">
    <property type="GO annotations" value="6 GO annotations based on evolutionary models"/>
</dbReference>
<dbReference type="PhylomeDB" id="Q9Y6I9"/>
<dbReference type="TreeFam" id="TF328465"/>
<dbReference type="PathwayCommons" id="Q9Y6I9"/>
<dbReference type="Reactome" id="R-HSA-114608">
    <property type="pathway name" value="Platelet degranulation"/>
</dbReference>
<dbReference type="SignaLink" id="Q9Y6I9"/>
<dbReference type="BioGRID-ORCS" id="51368">
    <property type="hits" value="16 hits in 1157 CRISPR screens"/>
</dbReference>
<dbReference type="ChiTaRS" id="TEX264">
    <property type="organism name" value="human"/>
</dbReference>
<dbReference type="GenomeRNAi" id="51368"/>
<dbReference type="Pharos" id="Q9Y6I9">
    <property type="development level" value="Tbio"/>
</dbReference>
<dbReference type="PRO" id="PR:Q9Y6I9"/>
<dbReference type="Proteomes" id="UP000005640">
    <property type="component" value="Chromosome 3"/>
</dbReference>
<dbReference type="RNAct" id="Q9Y6I9">
    <property type="molecule type" value="protein"/>
</dbReference>
<dbReference type="Bgee" id="ENSG00000164081">
    <property type="expression patterns" value="Expressed in left testis and 181 other cell types or tissues"/>
</dbReference>
<dbReference type="ExpressionAtlas" id="Q9Y6I9">
    <property type="expression patterns" value="baseline and differential"/>
</dbReference>
<dbReference type="GO" id="GO:0000421">
    <property type="term" value="C:autophagosome membrane"/>
    <property type="evidence" value="ECO:0000314"/>
    <property type="project" value="GO_Central"/>
</dbReference>
<dbReference type="GO" id="GO:0005829">
    <property type="term" value="C:cytosol"/>
    <property type="evidence" value="ECO:0000314"/>
    <property type="project" value="UniProtKB"/>
</dbReference>
<dbReference type="GO" id="GO:0005783">
    <property type="term" value="C:endoplasmic reticulum"/>
    <property type="evidence" value="ECO:0000314"/>
    <property type="project" value="HPA"/>
</dbReference>
<dbReference type="GO" id="GO:0005789">
    <property type="term" value="C:endoplasmic reticulum membrane"/>
    <property type="evidence" value="ECO:0000314"/>
    <property type="project" value="GO_Central"/>
</dbReference>
<dbReference type="GO" id="GO:0005576">
    <property type="term" value="C:extracellular region"/>
    <property type="evidence" value="ECO:0000304"/>
    <property type="project" value="Reactome"/>
</dbReference>
<dbReference type="GO" id="GO:0005634">
    <property type="term" value="C:nucleus"/>
    <property type="evidence" value="ECO:0000314"/>
    <property type="project" value="UniProtKB"/>
</dbReference>
<dbReference type="GO" id="GO:0031093">
    <property type="term" value="C:platelet alpha granule lumen"/>
    <property type="evidence" value="ECO:0000304"/>
    <property type="project" value="Reactome"/>
</dbReference>
<dbReference type="GO" id="GO:0005657">
    <property type="term" value="C:replication fork"/>
    <property type="evidence" value="ECO:0000314"/>
    <property type="project" value="UniProtKB"/>
</dbReference>
<dbReference type="GO" id="GO:0038023">
    <property type="term" value="F:signaling receptor activity"/>
    <property type="evidence" value="ECO:0000314"/>
    <property type="project" value="MGI"/>
</dbReference>
<dbReference type="GO" id="GO:0106300">
    <property type="term" value="P:protein-DNA covalent cross-linking repair"/>
    <property type="evidence" value="ECO:0000314"/>
    <property type="project" value="UniProtKB"/>
</dbReference>
<dbReference type="GO" id="GO:0061709">
    <property type="term" value="P:reticulophagy"/>
    <property type="evidence" value="ECO:0000314"/>
    <property type="project" value="MGI"/>
</dbReference>
<dbReference type="FunFam" id="3.20.80.10:FF:000009">
    <property type="entry name" value="Testis-expressed sequence 264 protein"/>
    <property type="match status" value="1"/>
</dbReference>
<dbReference type="Gene3D" id="3.20.80.10">
    <property type="entry name" value="Regulatory factor, effector binding domain"/>
    <property type="match status" value="1"/>
</dbReference>
<dbReference type="InterPro" id="IPR011256">
    <property type="entry name" value="Reg_factor_effector_dom_sf"/>
</dbReference>
<dbReference type="PANTHER" id="PTHR15949">
    <property type="entry name" value="TESTIS-EXPRESSED PROTEIN 264"/>
    <property type="match status" value="1"/>
</dbReference>
<dbReference type="PANTHER" id="PTHR15949:SF3">
    <property type="entry name" value="TESTIS-EXPRESSED PROTEIN 264"/>
    <property type="match status" value="1"/>
</dbReference>
<dbReference type="SUPFAM" id="SSF55136">
    <property type="entry name" value="Probable bacterial effector-binding domain"/>
    <property type="match status" value="1"/>
</dbReference>
<evidence type="ECO:0000255" key="1"/>
<evidence type="ECO:0000256" key="2">
    <source>
        <dbReference type="SAM" id="MobiDB-lite"/>
    </source>
</evidence>
<evidence type="ECO:0000269" key="3">
    <source>
    </source>
</evidence>
<evidence type="ECO:0000269" key="4">
    <source>
    </source>
</evidence>
<evidence type="ECO:0000269" key="5">
    <source>
    </source>
</evidence>
<evidence type="ECO:0000303" key="6">
    <source>
    </source>
</evidence>
<evidence type="ECO:0000303" key="7">
    <source>
    </source>
</evidence>
<evidence type="ECO:0000303" key="8">
    <source ref="1"/>
</evidence>
<evidence type="ECO:0000305" key="9"/>
<evidence type="ECO:0000305" key="10">
    <source>
    </source>
</evidence>
<evidence type="ECO:0000312" key="11">
    <source>
        <dbReference type="HGNC" id="HGNC:30247"/>
    </source>
</evidence>
<evidence type="ECO:0007744" key="12">
    <source>
    </source>
</evidence>
<evidence type="ECO:0007744" key="13">
    <source>
    </source>
</evidence>
<evidence type="ECO:0007829" key="14">
    <source>
        <dbReference type="PDB" id="7VED"/>
    </source>
</evidence>
<accession>Q9Y6I9</accession>
<accession>B3KN87</accession>
<accession>Q9UKD7</accession>
<gene>
    <name evidence="6 7 11" type="primary">TEX264</name>
    <name evidence="8" type="synonym">ZSIG11</name>
    <name type="ORF">UNQ337/PRO536</name>
</gene>